<feature type="chain" id="PRO_1000002631" description="UDP-N-acetylglucosamine--N-acetylmuramyl-(pentapeptide) pyrophosphoryl-undecaprenol N-acetylglucosamine transferase">
    <location>
        <begin position="1"/>
        <end position="355"/>
    </location>
</feature>
<feature type="binding site" evidence="1">
    <location>
        <begin position="15"/>
        <end position="17"/>
    </location>
    <ligand>
        <name>UDP-N-acetyl-alpha-D-glucosamine</name>
        <dbReference type="ChEBI" id="CHEBI:57705"/>
    </ligand>
</feature>
<feature type="binding site" evidence="1">
    <location>
        <position position="127"/>
    </location>
    <ligand>
        <name>UDP-N-acetyl-alpha-D-glucosamine</name>
        <dbReference type="ChEBI" id="CHEBI:57705"/>
    </ligand>
</feature>
<feature type="binding site" evidence="1">
    <location>
        <position position="163"/>
    </location>
    <ligand>
        <name>UDP-N-acetyl-alpha-D-glucosamine</name>
        <dbReference type="ChEBI" id="CHEBI:57705"/>
    </ligand>
</feature>
<feature type="binding site" evidence="1">
    <location>
        <position position="191"/>
    </location>
    <ligand>
        <name>UDP-N-acetyl-alpha-D-glucosamine</name>
        <dbReference type="ChEBI" id="CHEBI:57705"/>
    </ligand>
</feature>
<feature type="binding site" evidence="1">
    <location>
        <position position="244"/>
    </location>
    <ligand>
        <name>UDP-N-acetyl-alpha-D-glucosamine</name>
        <dbReference type="ChEBI" id="CHEBI:57705"/>
    </ligand>
</feature>
<feature type="binding site" evidence="1">
    <location>
        <begin position="263"/>
        <end position="268"/>
    </location>
    <ligand>
        <name>UDP-N-acetyl-alpha-D-glucosamine</name>
        <dbReference type="ChEBI" id="CHEBI:57705"/>
    </ligand>
</feature>
<feature type="binding site" evidence="1">
    <location>
        <position position="288"/>
    </location>
    <ligand>
        <name>UDP-N-acetyl-alpha-D-glucosamine</name>
        <dbReference type="ChEBI" id="CHEBI:57705"/>
    </ligand>
</feature>
<keyword id="KW-0131">Cell cycle</keyword>
<keyword id="KW-0132">Cell division</keyword>
<keyword id="KW-0997">Cell inner membrane</keyword>
<keyword id="KW-1003">Cell membrane</keyword>
<keyword id="KW-0133">Cell shape</keyword>
<keyword id="KW-0961">Cell wall biogenesis/degradation</keyword>
<keyword id="KW-0328">Glycosyltransferase</keyword>
<keyword id="KW-0472">Membrane</keyword>
<keyword id="KW-0573">Peptidoglycan synthesis</keyword>
<keyword id="KW-1185">Reference proteome</keyword>
<keyword id="KW-0808">Transferase</keyword>
<proteinExistence type="inferred from homology"/>
<organism>
    <name type="scientific">Citrobacter koseri (strain ATCC BAA-895 / CDC 4225-83 / SGSC4696)</name>
    <dbReference type="NCBI Taxonomy" id="290338"/>
    <lineage>
        <taxon>Bacteria</taxon>
        <taxon>Pseudomonadati</taxon>
        <taxon>Pseudomonadota</taxon>
        <taxon>Gammaproteobacteria</taxon>
        <taxon>Enterobacterales</taxon>
        <taxon>Enterobacteriaceae</taxon>
        <taxon>Citrobacter</taxon>
    </lineage>
</organism>
<gene>
    <name evidence="1" type="primary">murG</name>
    <name type="ordered locus">CKO_03285</name>
</gene>
<comment type="function">
    <text evidence="1">Cell wall formation. Catalyzes the transfer of a GlcNAc subunit on undecaprenyl-pyrophosphoryl-MurNAc-pentapeptide (lipid intermediate I) to form undecaprenyl-pyrophosphoryl-MurNAc-(pentapeptide)GlcNAc (lipid intermediate II).</text>
</comment>
<comment type="catalytic activity">
    <reaction evidence="1">
        <text>di-trans,octa-cis-undecaprenyl diphospho-N-acetyl-alpha-D-muramoyl-L-alanyl-D-glutamyl-meso-2,6-diaminopimeloyl-D-alanyl-D-alanine + UDP-N-acetyl-alpha-D-glucosamine = di-trans,octa-cis-undecaprenyl diphospho-[N-acetyl-alpha-D-glucosaminyl-(1-&gt;4)]-N-acetyl-alpha-D-muramoyl-L-alanyl-D-glutamyl-meso-2,6-diaminopimeloyl-D-alanyl-D-alanine + UDP + H(+)</text>
        <dbReference type="Rhea" id="RHEA:31227"/>
        <dbReference type="ChEBI" id="CHEBI:15378"/>
        <dbReference type="ChEBI" id="CHEBI:57705"/>
        <dbReference type="ChEBI" id="CHEBI:58223"/>
        <dbReference type="ChEBI" id="CHEBI:61387"/>
        <dbReference type="ChEBI" id="CHEBI:61388"/>
        <dbReference type="EC" id="2.4.1.227"/>
    </reaction>
</comment>
<comment type="pathway">
    <text evidence="1">Cell wall biogenesis; peptidoglycan biosynthesis.</text>
</comment>
<comment type="subcellular location">
    <subcellularLocation>
        <location evidence="1">Cell inner membrane</location>
        <topology evidence="1">Peripheral membrane protein</topology>
        <orientation evidence="1">Cytoplasmic side</orientation>
    </subcellularLocation>
</comment>
<comment type="similarity">
    <text evidence="1">Belongs to the glycosyltransferase 28 family. MurG subfamily.</text>
</comment>
<dbReference type="EC" id="2.4.1.227" evidence="1"/>
<dbReference type="EMBL" id="CP000822">
    <property type="protein sequence ID" value="ABV14369.1"/>
    <property type="molecule type" value="Genomic_DNA"/>
</dbReference>
<dbReference type="RefSeq" id="WP_012134072.1">
    <property type="nucleotide sequence ID" value="NC_009792.1"/>
</dbReference>
<dbReference type="SMR" id="A8ALK6"/>
<dbReference type="STRING" id="290338.CKO_03285"/>
<dbReference type="CAZy" id="GT28">
    <property type="family name" value="Glycosyltransferase Family 28"/>
</dbReference>
<dbReference type="GeneID" id="45137058"/>
<dbReference type="KEGG" id="cko:CKO_03285"/>
<dbReference type="HOGENOM" id="CLU_037404_2_0_6"/>
<dbReference type="OrthoDB" id="9808936at2"/>
<dbReference type="UniPathway" id="UPA00219"/>
<dbReference type="Proteomes" id="UP000008148">
    <property type="component" value="Chromosome"/>
</dbReference>
<dbReference type="GO" id="GO:0005886">
    <property type="term" value="C:plasma membrane"/>
    <property type="evidence" value="ECO:0007669"/>
    <property type="project" value="UniProtKB-SubCell"/>
</dbReference>
<dbReference type="GO" id="GO:0051991">
    <property type="term" value="F:UDP-N-acetyl-D-glucosamine:N-acetylmuramoyl-L-alanyl-D-glutamyl-meso-2,6-diaminopimelyl-D-alanyl-D-alanine-diphosphoundecaprenol 4-beta-N-acetylglucosaminlytransferase activity"/>
    <property type="evidence" value="ECO:0007669"/>
    <property type="project" value="RHEA"/>
</dbReference>
<dbReference type="GO" id="GO:0050511">
    <property type="term" value="F:undecaprenyldiphospho-muramoylpentapeptide beta-N-acetylglucosaminyltransferase activity"/>
    <property type="evidence" value="ECO:0007669"/>
    <property type="project" value="UniProtKB-UniRule"/>
</dbReference>
<dbReference type="GO" id="GO:0005975">
    <property type="term" value="P:carbohydrate metabolic process"/>
    <property type="evidence" value="ECO:0007669"/>
    <property type="project" value="InterPro"/>
</dbReference>
<dbReference type="GO" id="GO:0051301">
    <property type="term" value="P:cell division"/>
    <property type="evidence" value="ECO:0007669"/>
    <property type="project" value="UniProtKB-KW"/>
</dbReference>
<dbReference type="GO" id="GO:0071555">
    <property type="term" value="P:cell wall organization"/>
    <property type="evidence" value="ECO:0007669"/>
    <property type="project" value="UniProtKB-KW"/>
</dbReference>
<dbReference type="GO" id="GO:0030259">
    <property type="term" value="P:lipid glycosylation"/>
    <property type="evidence" value="ECO:0007669"/>
    <property type="project" value="UniProtKB-UniRule"/>
</dbReference>
<dbReference type="GO" id="GO:0009252">
    <property type="term" value="P:peptidoglycan biosynthetic process"/>
    <property type="evidence" value="ECO:0007669"/>
    <property type="project" value="UniProtKB-UniRule"/>
</dbReference>
<dbReference type="GO" id="GO:0008360">
    <property type="term" value="P:regulation of cell shape"/>
    <property type="evidence" value="ECO:0007669"/>
    <property type="project" value="UniProtKB-KW"/>
</dbReference>
<dbReference type="CDD" id="cd03785">
    <property type="entry name" value="GT28_MurG"/>
    <property type="match status" value="1"/>
</dbReference>
<dbReference type="FunFam" id="3.40.50.2000:FF:000016">
    <property type="entry name" value="UDP-N-acetylglucosamine--N-acetylmuramyl-(pentapeptide) pyrophosphoryl-undecaprenol N-acetylglucosamine transferase"/>
    <property type="match status" value="1"/>
</dbReference>
<dbReference type="FunFam" id="3.40.50.2000:FF:000018">
    <property type="entry name" value="UDP-N-acetylglucosamine--N-acetylmuramyl-(pentapeptide) pyrophosphoryl-undecaprenol N-acetylglucosamine transferase"/>
    <property type="match status" value="1"/>
</dbReference>
<dbReference type="Gene3D" id="3.40.50.2000">
    <property type="entry name" value="Glycogen Phosphorylase B"/>
    <property type="match status" value="2"/>
</dbReference>
<dbReference type="HAMAP" id="MF_00033">
    <property type="entry name" value="MurG"/>
    <property type="match status" value="1"/>
</dbReference>
<dbReference type="InterPro" id="IPR006009">
    <property type="entry name" value="GlcNAc_MurG"/>
</dbReference>
<dbReference type="InterPro" id="IPR007235">
    <property type="entry name" value="Glyco_trans_28_C"/>
</dbReference>
<dbReference type="InterPro" id="IPR004276">
    <property type="entry name" value="GlycoTrans_28_N"/>
</dbReference>
<dbReference type="NCBIfam" id="TIGR01133">
    <property type="entry name" value="murG"/>
    <property type="match status" value="1"/>
</dbReference>
<dbReference type="PANTHER" id="PTHR21015:SF22">
    <property type="entry name" value="GLYCOSYLTRANSFERASE"/>
    <property type="match status" value="1"/>
</dbReference>
<dbReference type="PANTHER" id="PTHR21015">
    <property type="entry name" value="UDP-N-ACETYLGLUCOSAMINE--N-ACETYLMURAMYL-(PENTAPEPTIDE) PYROPHOSPHORYL-UNDECAPRENOL N-ACETYLGLUCOSAMINE TRANSFERASE 1"/>
    <property type="match status" value="1"/>
</dbReference>
<dbReference type="Pfam" id="PF04101">
    <property type="entry name" value="Glyco_tran_28_C"/>
    <property type="match status" value="1"/>
</dbReference>
<dbReference type="Pfam" id="PF03033">
    <property type="entry name" value="Glyco_transf_28"/>
    <property type="match status" value="1"/>
</dbReference>
<dbReference type="SUPFAM" id="SSF53756">
    <property type="entry name" value="UDP-Glycosyltransferase/glycogen phosphorylase"/>
    <property type="match status" value="1"/>
</dbReference>
<sequence>MSGQPKRLMVMAGGTGGHVFPGLAVAHHLMDQGWQVRWLGTADRMEADLVPKHGIEIDFIRISGLRGKGVKALLAAPLRIFNAWRQARAIMKQFKPDVVLGMGGYVSGPGGLAAWSLGIPVVLHEQNGIAGLTNKWLAKIATTVMQAFPGAFPKADVVGNPVRTDVLALPLPQERLAGREGPIRVLVVGGSQGARVLNQTLPQVAAKLGDTVTIWHQSGKGAQQTVEQAYAGAGQPQHKVTEFIDDMAAAYAWADVVVCRSGALTVSEIAAAGLPALFVPFQHKDRQQYWNALPLEKAGAAKIFEQPQFTVDAVASTLSGWSRETLLTMAERARAASIPDATERVANEVSRAARA</sequence>
<accession>A8ALK6</accession>
<evidence type="ECO:0000255" key="1">
    <source>
        <dbReference type="HAMAP-Rule" id="MF_00033"/>
    </source>
</evidence>
<reference key="1">
    <citation type="submission" date="2007-08" db="EMBL/GenBank/DDBJ databases">
        <authorList>
            <consortium name="The Citrobacter koseri Genome Sequencing Project"/>
            <person name="McClelland M."/>
            <person name="Sanderson E.K."/>
            <person name="Porwollik S."/>
            <person name="Spieth J."/>
            <person name="Clifton W.S."/>
            <person name="Latreille P."/>
            <person name="Courtney L."/>
            <person name="Wang C."/>
            <person name="Pepin K."/>
            <person name="Bhonagiri V."/>
            <person name="Nash W."/>
            <person name="Johnson M."/>
            <person name="Thiruvilangam P."/>
            <person name="Wilson R."/>
        </authorList>
    </citation>
    <scope>NUCLEOTIDE SEQUENCE [LARGE SCALE GENOMIC DNA]</scope>
    <source>
        <strain>ATCC BAA-895 / CDC 4225-83 / SGSC4696</strain>
    </source>
</reference>
<protein>
    <recommendedName>
        <fullName evidence="1">UDP-N-acetylglucosamine--N-acetylmuramyl-(pentapeptide) pyrophosphoryl-undecaprenol N-acetylglucosamine transferase</fullName>
        <ecNumber evidence="1">2.4.1.227</ecNumber>
    </recommendedName>
    <alternativeName>
        <fullName evidence="1">Undecaprenyl-PP-MurNAc-pentapeptide-UDPGlcNAc GlcNAc transferase</fullName>
    </alternativeName>
</protein>
<name>MURG_CITK8</name>